<feature type="chain" id="PRO_1000077210" description="Serine--tRNA ligase">
    <location>
        <begin position="1"/>
        <end position="424"/>
    </location>
</feature>
<feature type="binding site" evidence="1">
    <location>
        <begin position="229"/>
        <end position="231"/>
    </location>
    <ligand>
        <name>L-serine</name>
        <dbReference type="ChEBI" id="CHEBI:33384"/>
    </ligand>
</feature>
<feature type="binding site" evidence="1">
    <location>
        <begin position="260"/>
        <end position="262"/>
    </location>
    <ligand>
        <name>ATP</name>
        <dbReference type="ChEBI" id="CHEBI:30616"/>
    </ligand>
</feature>
<feature type="binding site" evidence="1">
    <location>
        <position position="283"/>
    </location>
    <ligand>
        <name>L-serine</name>
        <dbReference type="ChEBI" id="CHEBI:33384"/>
    </ligand>
</feature>
<feature type="binding site" evidence="1">
    <location>
        <begin position="347"/>
        <end position="350"/>
    </location>
    <ligand>
        <name>ATP</name>
        <dbReference type="ChEBI" id="CHEBI:30616"/>
    </ligand>
</feature>
<feature type="binding site" evidence="1">
    <location>
        <position position="383"/>
    </location>
    <ligand>
        <name>L-serine</name>
        <dbReference type="ChEBI" id="CHEBI:33384"/>
    </ligand>
</feature>
<name>SYS_ROSCS</name>
<protein>
    <recommendedName>
        <fullName evidence="1">Serine--tRNA ligase</fullName>
        <ecNumber evidence="1">6.1.1.11</ecNumber>
    </recommendedName>
    <alternativeName>
        <fullName evidence="1">Seryl-tRNA synthetase</fullName>
        <shortName evidence="1">SerRS</shortName>
    </alternativeName>
    <alternativeName>
        <fullName evidence="1">Seryl-tRNA(Ser/Sec) synthetase</fullName>
    </alternativeName>
</protein>
<comment type="function">
    <text evidence="1">Catalyzes the attachment of serine to tRNA(Ser). Is also able to aminoacylate tRNA(Sec) with serine, to form the misacylated tRNA L-seryl-tRNA(Sec), which will be further converted into selenocysteinyl-tRNA(Sec).</text>
</comment>
<comment type="catalytic activity">
    <reaction evidence="1">
        <text>tRNA(Ser) + L-serine + ATP = L-seryl-tRNA(Ser) + AMP + diphosphate + H(+)</text>
        <dbReference type="Rhea" id="RHEA:12292"/>
        <dbReference type="Rhea" id="RHEA-COMP:9669"/>
        <dbReference type="Rhea" id="RHEA-COMP:9703"/>
        <dbReference type="ChEBI" id="CHEBI:15378"/>
        <dbReference type="ChEBI" id="CHEBI:30616"/>
        <dbReference type="ChEBI" id="CHEBI:33019"/>
        <dbReference type="ChEBI" id="CHEBI:33384"/>
        <dbReference type="ChEBI" id="CHEBI:78442"/>
        <dbReference type="ChEBI" id="CHEBI:78533"/>
        <dbReference type="ChEBI" id="CHEBI:456215"/>
        <dbReference type="EC" id="6.1.1.11"/>
    </reaction>
</comment>
<comment type="catalytic activity">
    <reaction evidence="1">
        <text>tRNA(Sec) + L-serine + ATP = L-seryl-tRNA(Sec) + AMP + diphosphate + H(+)</text>
        <dbReference type="Rhea" id="RHEA:42580"/>
        <dbReference type="Rhea" id="RHEA-COMP:9742"/>
        <dbReference type="Rhea" id="RHEA-COMP:10128"/>
        <dbReference type="ChEBI" id="CHEBI:15378"/>
        <dbReference type="ChEBI" id="CHEBI:30616"/>
        <dbReference type="ChEBI" id="CHEBI:33019"/>
        <dbReference type="ChEBI" id="CHEBI:33384"/>
        <dbReference type="ChEBI" id="CHEBI:78442"/>
        <dbReference type="ChEBI" id="CHEBI:78533"/>
        <dbReference type="ChEBI" id="CHEBI:456215"/>
        <dbReference type="EC" id="6.1.1.11"/>
    </reaction>
</comment>
<comment type="pathway">
    <text evidence="1">Aminoacyl-tRNA biosynthesis; selenocysteinyl-tRNA(Sec) biosynthesis; L-seryl-tRNA(Sec) from L-serine and tRNA(Sec): step 1/1.</text>
</comment>
<comment type="subunit">
    <text evidence="1">Homodimer. The tRNA molecule binds across the dimer.</text>
</comment>
<comment type="subcellular location">
    <subcellularLocation>
        <location evidence="1">Cytoplasm</location>
    </subcellularLocation>
</comment>
<comment type="domain">
    <text evidence="1">Consists of two distinct domains, a catalytic core and a N-terminal extension that is involved in tRNA binding.</text>
</comment>
<comment type="similarity">
    <text evidence="1">Belongs to the class-II aminoacyl-tRNA synthetase family. Type-1 seryl-tRNA synthetase subfamily.</text>
</comment>
<dbReference type="EC" id="6.1.1.11" evidence="1"/>
<dbReference type="EMBL" id="CP000804">
    <property type="protein sequence ID" value="ABU57588.1"/>
    <property type="molecule type" value="Genomic_DNA"/>
</dbReference>
<dbReference type="RefSeq" id="WP_012120016.1">
    <property type="nucleotide sequence ID" value="NC_009767.1"/>
</dbReference>
<dbReference type="SMR" id="A7NJB8"/>
<dbReference type="STRING" id="383372.Rcas_1494"/>
<dbReference type="KEGG" id="rca:Rcas_1494"/>
<dbReference type="eggNOG" id="COG0172">
    <property type="taxonomic scope" value="Bacteria"/>
</dbReference>
<dbReference type="HOGENOM" id="CLU_023797_1_1_0"/>
<dbReference type="OrthoDB" id="9804647at2"/>
<dbReference type="UniPathway" id="UPA00906">
    <property type="reaction ID" value="UER00895"/>
</dbReference>
<dbReference type="Proteomes" id="UP000000263">
    <property type="component" value="Chromosome"/>
</dbReference>
<dbReference type="GO" id="GO:0005737">
    <property type="term" value="C:cytoplasm"/>
    <property type="evidence" value="ECO:0007669"/>
    <property type="project" value="UniProtKB-SubCell"/>
</dbReference>
<dbReference type="GO" id="GO:0005524">
    <property type="term" value="F:ATP binding"/>
    <property type="evidence" value="ECO:0007669"/>
    <property type="project" value="UniProtKB-UniRule"/>
</dbReference>
<dbReference type="GO" id="GO:0004828">
    <property type="term" value="F:serine-tRNA ligase activity"/>
    <property type="evidence" value="ECO:0007669"/>
    <property type="project" value="UniProtKB-UniRule"/>
</dbReference>
<dbReference type="GO" id="GO:0016260">
    <property type="term" value="P:selenocysteine biosynthetic process"/>
    <property type="evidence" value="ECO:0007669"/>
    <property type="project" value="UniProtKB-UniRule"/>
</dbReference>
<dbReference type="GO" id="GO:0006434">
    <property type="term" value="P:seryl-tRNA aminoacylation"/>
    <property type="evidence" value="ECO:0007669"/>
    <property type="project" value="UniProtKB-UniRule"/>
</dbReference>
<dbReference type="CDD" id="cd00770">
    <property type="entry name" value="SerRS_core"/>
    <property type="match status" value="1"/>
</dbReference>
<dbReference type="Gene3D" id="3.30.930.10">
    <property type="entry name" value="Bira Bifunctional Protein, Domain 2"/>
    <property type="match status" value="1"/>
</dbReference>
<dbReference type="Gene3D" id="1.10.287.40">
    <property type="entry name" value="Serine-tRNA synthetase, tRNA binding domain"/>
    <property type="match status" value="1"/>
</dbReference>
<dbReference type="HAMAP" id="MF_00176">
    <property type="entry name" value="Ser_tRNA_synth_type1"/>
    <property type="match status" value="1"/>
</dbReference>
<dbReference type="InterPro" id="IPR002314">
    <property type="entry name" value="aa-tRNA-synt_IIb"/>
</dbReference>
<dbReference type="InterPro" id="IPR006195">
    <property type="entry name" value="aa-tRNA-synth_II"/>
</dbReference>
<dbReference type="InterPro" id="IPR045864">
    <property type="entry name" value="aa-tRNA-synth_II/BPL/LPL"/>
</dbReference>
<dbReference type="InterPro" id="IPR002317">
    <property type="entry name" value="Ser-tRNA-ligase_type_1"/>
</dbReference>
<dbReference type="InterPro" id="IPR015866">
    <property type="entry name" value="Ser-tRNA-synth_1_N"/>
</dbReference>
<dbReference type="InterPro" id="IPR042103">
    <property type="entry name" value="SerRS_1_N_sf"/>
</dbReference>
<dbReference type="InterPro" id="IPR033729">
    <property type="entry name" value="SerRS_core"/>
</dbReference>
<dbReference type="InterPro" id="IPR010978">
    <property type="entry name" value="tRNA-bd_arm"/>
</dbReference>
<dbReference type="NCBIfam" id="TIGR00414">
    <property type="entry name" value="serS"/>
    <property type="match status" value="1"/>
</dbReference>
<dbReference type="PANTHER" id="PTHR43697:SF1">
    <property type="entry name" value="SERINE--TRNA LIGASE"/>
    <property type="match status" value="1"/>
</dbReference>
<dbReference type="PANTHER" id="PTHR43697">
    <property type="entry name" value="SERYL-TRNA SYNTHETASE"/>
    <property type="match status" value="1"/>
</dbReference>
<dbReference type="Pfam" id="PF02403">
    <property type="entry name" value="Seryl_tRNA_N"/>
    <property type="match status" value="1"/>
</dbReference>
<dbReference type="Pfam" id="PF00587">
    <property type="entry name" value="tRNA-synt_2b"/>
    <property type="match status" value="1"/>
</dbReference>
<dbReference type="PIRSF" id="PIRSF001529">
    <property type="entry name" value="Ser-tRNA-synth_IIa"/>
    <property type="match status" value="1"/>
</dbReference>
<dbReference type="PRINTS" id="PR00981">
    <property type="entry name" value="TRNASYNTHSER"/>
</dbReference>
<dbReference type="SUPFAM" id="SSF55681">
    <property type="entry name" value="Class II aaRS and biotin synthetases"/>
    <property type="match status" value="1"/>
</dbReference>
<dbReference type="SUPFAM" id="SSF46589">
    <property type="entry name" value="tRNA-binding arm"/>
    <property type="match status" value="1"/>
</dbReference>
<dbReference type="PROSITE" id="PS50862">
    <property type="entry name" value="AA_TRNA_LIGASE_II"/>
    <property type="match status" value="1"/>
</dbReference>
<keyword id="KW-0030">Aminoacyl-tRNA synthetase</keyword>
<keyword id="KW-0067">ATP-binding</keyword>
<keyword id="KW-0963">Cytoplasm</keyword>
<keyword id="KW-0436">Ligase</keyword>
<keyword id="KW-0547">Nucleotide-binding</keyword>
<keyword id="KW-0648">Protein biosynthesis</keyword>
<keyword id="KW-1185">Reference proteome</keyword>
<evidence type="ECO:0000255" key="1">
    <source>
        <dbReference type="HAMAP-Rule" id="MF_00176"/>
    </source>
</evidence>
<accession>A7NJB8</accession>
<proteinExistence type="inferred from homology"/>
<organism>
    <name type="scientific">Roseiflexus castenholzii (strain DSM 13941 / HLO8)</name>
    <dbReference type="NCBI Taxonomy" id="383372"/>
    <lineage>
        <taxon>Bacteria</taxon>
        <taxon>Bacillati</taxon>
        <taxon>Chloroflexota</taxon>
        <taxon>Chloroflexia</taxon>
        <taxon>Chloroflexales</taxon>
        <taxon>Roseiflexineae</taxon>
        <taxon>Roseiflexaceae</taxon>
        <taxon>Roseiflexus</taxon>
    </lineage>
</organism>
<sequence>MLDIRLIREQPDMVKAALGRAGVDPAQVDAVLAYDEQRRALLREVEKLKALRNAVSKEIGKMSDAGERDTKIAEMRAVGDRIAALDRELAAVEERQYAALMELRNLPHPAVPDGPDETYNVVIAQEGEPRAFDFAPKPHWELGEALDIIDFERGVKLSGSRFYVLKGLGARLQRALIQWMLDLHIQQGYHEVYTPFVVKEQCMWGARQLPKFRDNLYRDVEDDLWLVPTAEVPVTNLHRDEILEADQLPLRYCAYTPCFRREKMSAGRDVRGIKRGHQFDKVEMYMFVHPDTSYDELEKLRADAEATCRLLGLTFRTKELCTGDLGFAATRTYDIEVWAPGQGEWLEVSSCSNVEAFQARAANIRYRSAPGARPEYVHTLNGSGLGLPRTLIAIMENYQQADGSIIIPDVLRPYMGGAEVIRRS</sequence>
<gene>
    <name evidence="1" type="primary">serS</name>
    <name type="ordered locus">Rcas_1494</name>
</gene>
<reference key="1">
    <citation type="submission" date="2007-08" db="EMBL/GenBank/DDBJ databases">
        <title>Complete sequence of Roseiflexus castenholzii DSM 13941.</title>
        <authorList>
            <consortium name="US DOE Joint Genome Institute"/>
            <person name="Copeland A."/>
            <person name="Lucas S."/>
            <person name="Lapidus A."/>
            <person name="Barry K."/>
            <person name="Glavina del Rio T."/>
            <person name="Dalin E."/>
            <person name="Tice H."/>
            <person name="Pitluck S."/>
            <person name="Thompson L.S."/>
            <person name="Brettin T."/>
            <person name="Bruce D."/>
            <person name="Detter J.C."/>
            <person name="Han C."/>
            <person name="Tapia R."/>
            <person name="Schmutz J."/>
            <person name="Larimer F."/>
            <person name="Land M."/>
            <person name="Hauser L."/>
            <person name="Kyrpides N."/>
            <person name="Mikhailova N."/>
            <person name="Bryant D.A."/>
            <person name="Hanada S."/>
            <person name="Tsukatani Y."/>
            <person name="Richardson P."/>
        </authorList>
    </citation>
    <scope>NUCLEOTIDE SEQUENCE [LARGE SCALE GENOMIC DNA]</scope>
    <source>
        <strain>DSM 13941 / HLO8</strain>
    </source>
</reference>